<keyword id="KW-1003">Cell membrane</keyword>
<keyword id="KW-1015">Disulfide bond</keyword>
<keyword id="KW-0325">Glycoprotein</keyword>
<keyword id="KW-0378">Hydrolase</keyword>
<keyword id="KW-0472">Membrane</keyword>
<keyword id="KW-0479">Metal-binding</keyword>
<keyword id="KW-0482">Metalloprotease</keyword>
<keyword id="KW-0597">Phosphoprotein</keyword>
<keyword id="KW-0645">Protease</keyword>
<keyword id="KW-1185">Reference proteome</keyword>
<keyword id="KW-0735">Signal-anchor</keyword>
<keyword id="KW-0812">Transmembrane</keyword>
<keyword id="KW-1133">Transmembrane helix</keyword>
<keyword id="KW-0862">Zinc</keyword>
<name>ECE1_CAVPO</name>
<feature type="chain" id="PRO_0000078219" description="Endothelin-converting enzyme 1">
    <location>
        <begin position="1"/>
        <end position="754"/>
    </location>
</feature>
<feature type="topological domain" description="Cytoplasmic" evidence="5">
    <location>
        <begin position="1"/>
        <end position="52"/>
    </location>
</feature>
<feature type="transmembrane region" description="Helical; Signal-anchor for type II membrane protein" evidence="5">
    <location>
        <begin position="53"/>
        <end position="73"/>
    </location>
</feature>
<feature type="topological domain" description="Extracellular" evidence="5">
    <location>
        <begin position="74"/>
        <end position="754"/>
    </location>
</feature>
<feature type="domain" description="Peptidase M13" evidence="6">
    <location>
        <begin position="82"/>
        <end position="754"/>
    </location>
</feature>
<feature type="active site" evidence="6 7">
    <location>
        <position position="592"/>
    </location>
</feature>
<feature type="active site" description="Proton donor" evidence="6">
    <location>
        <position position="655"/>
    </location>
</feature>
<feature type="binding site" evidence="6 7">
    <location>
        <position position="591"/>
    </location>
    <ligand>
        <name>Zn(2+)</name>
        <dbReference type="ChEBI" id="CHEBI:29105"/>
        <note>catalytic</note>
    </ligand>
</feature>
<feature type="binding site" evidence="6 7">
    <location>
        <position position="595"/>
    </location>
    <ligand>
        <name>Zn(2+)</name>
        <dbReference type="ChEBI" id="CHEBI:29105"/>
        <note>catalytic</note>
    </ligand>
</feature>
<feature type="binding site" evidence="6">
    <location>
        <position position="651"/>
    </location>
    <ligand>
        <name>Zn(2+)</name>
        <dbReference type="ChEBI" id="CHEBI:29105"/>
        <note>catalytic</note>
    </ligand>
</feature>
<feature type="modified residue" description="Phosphothreonine" evidence="3">
    <location>
        <position position="9"/>
    </location>
</feature>
<feature type="glycosylation site" description="N-linked (GlcNAc...) asparagine" evidence="5">
    <location>
        <position position="150"/>
    </location>
</feature>
<feature type="glycosylation site" description="N-linked (GlcNAc...) asparagine" evidence="5">
    <location>
        <position position="171"/>
    </location>
</feature>
<feature type="glycosylation site" description="N-linked (GlcNAc...) asparagine" evidence="5">
    <location>
        <position position="194"/>
    </location>
</feature>
<feature type="glycosylation site" description="N-linked (GlcNAc...) asparagine" evidence="5">
    <location>
        <position position="254"/>
    </location>
</feature>
<feature type="glycosylation site" description="N-linked (GlcNAc...) asparagine" evidence="5">
    <location>
        <position position="300"/>
    </location>
</feature>
<feature type="glycosylation site" description="N-linked (GlcNAc...) asparagine" evidence="5">
    <location>
        <position position="346"/>
    </location>
</feature>
<feature type="glycosylation site" description="N-linked (GlcNAc...) asparagine" evidence="5">
    <location>
        <position position="367"/>
    </location>
</feature>
<feature type="glycosylation site" description="N-linked (GlcNAc...) asparagine" evidence="5">
    <location>
        <position position="523"/>
    </location>
</feature>
<feature type="glycosylation site" description="N-linked (GlcNAc...) asparagine" evidence="5">
    <location>
        <position position="616"/>
    </location>
</feature>
<feature type="glycosylation site" description="N-linked (GlcNAc...) asparagine" evidence="5">
    <location>
        <position position="635"/>
    </location>
</feature>
<feature type="disulfide bond" evidence="6">
    <location>
        <begin position="83"/>
        <end position="88"/>
    </location>
</feature>
<feature type="disulfide bond" evidence="6">
    <location>
        <begin position="106"/>
        <end position="739"/>
    </location>
</feature>
<feature type="disulfide bond" evidence="6">
    <location>
        <begin position="114"/>
        <end position="699"/>
    </location>
</feature>
<feature type="disulfide bond" evidence="6">
    <location>
        <begin position="169"/>
        <end position="419"/>
    </location>
</feature>
<feature type="disulfide bond" evidence="6">
    <location>
        <begin position="628"/>
        <end position="751"/>
    </location>
</feature>
<evidence type="ECO:0000250" key="1"/>
<evidence type="ECO:0000250" key="2">
    <source>
        <dbReference type="UniProtKB" id="P42891"/>
    </source>
</evidence>
<evidence type="ECO:0000250" key="3">
    <source>
        <dbReference type="UniProtKB" id="P42892"/>
    </source>
</evidence>
<evidence type="ECO:0000250" key="4">
    <source>
        <dbReference type="UniProtKB" id="P42893"/>
    </source>
</evidence>
<evidence type="ECO:0000255" key="5"/>
<evidence type="ECO:0000255" key="6">
    <source>
        <dbReference type="PROSITE-ProRule" id="PRU01233"/>
    </source>
</evidence>
<evidence type="ECO:0000255" key="7">
    <source>
        <dbReference type="PROSITE-ProRule" id="PRU10095"/>
    </source>
</evidence>
<evidence type="ECO:0000305" key="8"/>
<accession>P97739</accession>
<organism>
    <name type="scientific">Cavia porcellus</name>
    <name type="common">Guinea pig</name>
    <dbReference type="NCBI Taxonomy" id="10141"/>
    <lineage>
        <taxon>Eukaryota</taxon>
        <taxon>Metazoa</taxon>
        <taxon>Chordata</taxon>
        <taxon>Craniata</taxon>
        <taxon>Vertebrata</taxon>
        <taxon>Euteleostomi</taxon>
        <taxon>Mammalia</taxon>
        <taxon>Eutheria</taxon>
        <taxon>Euarchontoglires</taxon>
        <taxon>Glires</taxon>
        <taxon>Rodentia</taxon>
        <taxon>Hystricomorpha</taxon>
        <taxon>Caviidae</taxon>
        <taxon>Cavia</taxon>
    </lineage>
</organism>
<dbReference type="EC" id="3.4.24.71"/>
<dbReference type="EMBL" id="S82653">
    <property type="protein sequence ID" value="AAB46734.1"/>
    <property type="molecule type" value="mRNA"/>
</dbReference>
<dbReference type="SMR" id="P97739"/>
<dbReference type="FunCoup" id="P97739">
    <property type="interactions" value="467"/>
</dbReference>
<dbReference type="STRING" id="10141.ENSCPOP00000010493"/>
<dbReference type="MEROPS" id="M13.002"/>
<dbReference type="GlyCosmos" id="P97739">
    <property type="glycosylation" value="10 sites, No reported glycans"/>
</dbReference>
<dbReference type="eggNOG" id="KOG3624">
    <property type="taxonomic scope" value="Eukaryota"/>
</dbReference>
<dbReference type="InParanoid" id="P97739"/>
<dbReference type="Proteomes" id="UP000005447">
    <property type="component" value="Unassembled WGS sequence"/>
</dbReference>
<dbReference type="GO" id="GO:0005886">
    <property type="term" value="C:plasma membrane"/>
    <property type="evidence" value="ECO:0007669"/>
    <property type="project" value="UniProtKB-SubCell"/>
</dbReference>
<dbReference type="GO" id="GO:0046872">
    <property type="term" value="F:metal ion binding"/>
    <property type="evidence" value="ECO:0007669"/>
    <property type="project" value="UniProtKB-KW"/>
</dbReference>
<dbReference type="GO" id="GO:0004222">
    <property type="term" value="F:metalloendopeptidase activity"/>
    <property type="evidence" value="ECO:0007669"/>
    <property type="project" value="UniProtKB-EC"/>
</dbReference>
<dbReference type="GO" id="GO:0016486">
    <property type="term" value="P:peptide hormone processing"/>
    <property type="evidence" value="ECO:0007669"/>
    <property type="project" value="TreeGrafter"/>
</dbReference>
<dbReference type="CDD" id="cd08662">
    <property type="entry name" value="M13"/>
    <property type="match status" value="1"/>
</dbReference>
<dbReference type="FunFam" id="3.40.390.10:FF:000003">
    <property type="entry name" value="endothelin-converting enzyme 1 isoform X1"/>
    <property type="match status" value="1"/>
</dbReference>
<dbReference type="Gene3D" id="3.40.390.10">
    <property type="entry name" value="Collagenase (Catalytic Domain)"/>
    <property type="match status" value="1"/>
</dbReference>
<dbReference type="Gene3D" id="1.10.1380.10">
    <property type="entry name" value="Neutral endopeptidase , domain2"/>
    <property type="match status" value="1"/>
</dbReference>
<dbReference type="InterPro" id="IPR024079">
    <property type="entry name" value="MetalloPept_cat_dom_sf"/>
</dbReference>
<dbReference type="InterPro" id="IPR000718">
    <property type="entry name" value="Peptidase_M13"/>
</dbReference>
<dbReference type="InterPro" id="IPR018497">
    <property type="entry name" value="Peptidase_M13_C"/>
</dbReference>
<dbReference type="InterPro" id="IPR042089">
    <property type="entry name" value="Peptidase_M13_dom_2"/>
</dbReference>
<dbReference type="InterPro" id="IPR008753">
    <property type="entry name" value="Peptidase_M13_N"/>
</dbReference>
<dbReference type="PANTHER" id="PTHR11733:SF130">
    <property type="entry name" value="ENDOTHELIN-CONVERTING ENZYME 1"/>
    <property type="match status" value="1"/>
</dbReference>
<dbReference type="PANTHER" id="PTHR11733">
    <property type="entry name" value="ZINC METALLOPROTEASE FAMILY M13 NEPRILYSIN-RELATED"/>
    <property type="match status" value="1"/>
</dbReference>
<dbReference type="Pfam" id="PF01431">
    <property type="entry name" value="Peptidase_M13"/>
    <property type="match status" value="1"/>
</dbReference>
<dbReference type="Pfam" id="PF05649">
    <property type="entry name" value="Peptidase_M13_N"/>
    <property type="match status" value="1"/>
</dbReference>
<dbReference type="PRINTS" id="PR00786">
    <property type="entry name" value="NEPRILYSIN"/>
</dbReference>
<dbReference type="SUPFAM" id="SSF55486">
    <property type="entry name" value="Metalloproteases ('zincins'), catalytic domain"/>
    <property type="match status" value="1"/>
</dbReference>
<dbReference type="PROSITE" id="PS51885">
    <property type="entry name" value="NEPRILYSIN"/>
    <property type="match status" value="1"/>
</dbReference>
<dbReference type="PROSITE" id="PS00142">
    <property type="entry name" value="ZINC_PROTEASE"/>
    <property type="match status" value="1"/>
</dbReference>
<gene>
    <name type="primary">ECE1</name>
</gene>
<comment type="function">
    <text>Converts big endothelin-1 to endothelin-1.</text>
</comment>
<comment type="catalytic activity">
    <reaction>
        <text>Hydrolysis of the 21-Trp-|-Val-22 bond in big endothelin to form endothelin 1.</text>
        <dbReference type="EC" id="3.4.24.71"/>
    </reaction>
</comment>
<comment type="cofactor">
    <cofactor evidence="1">
        <name>Zn(2+)</name>
        <dbReference type="ChEBI" id="CHEBI:29105"/>
    </cofactor>
    <text evidence="1">Binds 1 zinc ion per subunit.</text>
</comment>
<comment type="activity regulation">
    <text evidence="1">Inhibited by phosphoramidon.</text>
</comment>
<comment type="subunit">
    <text evidence="2 4">Homodimer; disulfide-linked (By similarity). Interacts with PPP1R16B (By similarity). Interacts with TSPAN8; this interaction recruits the endothelin converting enzyme ECE1 to tetraspanin-enriched microdomains and positively modulates its enzymatic activity (By similarity).</text>
</comment>
<comment type="subcellular location">
    <subcellularLocation>
        <location>Cell membrane</location>
        <topology>Single-pass type II membrane protein</topology>
    </subcellularLocation>
</comment>
<comment type="similarity">
    <text evidence="6 8">Belongs to the peptidase M13 family.</text>
</comment>
<proteinExistence type="evidence at transcript level"/>
<protein>
    <recommendedName>
        <fullName>Endothelin-converting enzyme 1</fullName>
        <shortName>ECE-1</shortName>
        <ecNumber>3.4.24.71</ecNumber>
    </recommendedName>
</protein>
<reference key="1">
    <citation type="journal article" date="1995" name="Biochem. Mol. Biol. Int.">
        <title>Endothelin-1 production and endothelin converting enzyme expression by guinea pig airway epithelial cells.</title>
        <authorList>
            <person name="Shima H."/>
            <person name="Yamanouchi M."/>
            <person name="Omori K."/>
            <person name="Sugiura M."/>
            <person name="Kawashima K."/>
            <person name="Sato T."/>
        </authorList>
    </citation>
    <scope>NUCLEOTIDE SEQUENCE [MRNA]</scope>
</reference>
<sequence>MMSTYKRATLDEEDLVDSLSEGEVYPNGLQVNFRNFRSSQRCWATRTQVEKRLIVLVALLAAGLVACLTALGIQYRTRTPPVCLSEACVSVTSSILNSMNPTVDPCQDFFSYACGGWIKANPVPDGHSRWGAFSNLWEHNQAIIKHLLENSTASVSEAERKAQVYYRACMNETRIEELRAKPLMELIEKLGGWNITGPWAKDNFQDTLQVVTAHYRTSPFFSVYVSADSKNSNRNVIHVDQSGLGLPSRDYYLNKTENEKVLNGYLNYMVQLGKLLGGGDENAIRAQMQQILDFETALANITIPQEKRRDEELIYHKVTAAELQTLAPAINWLPFLNTIFYPVEINESEPIVVYDKEYLEQVSTLINTTDKCLLNNYMIWNLVRKTSSFLDQRFQDADEKFMEVMYGTKKTCLPRWKFCVSDTENNLGFGLGPMFVKATFAEDSKNIASEIILEIKKAFEESLSTLKWMDEDTRKSAKEKADAIYNMIGYPNFIMDPKELDKVFNDYTAVPDLYFENAMRFFNFSWRVTAEQLRKAPNRDQWSMTPPMVNAYYSPTKNEIVFPAGILPAPFYTRSSPKALNFGGIGVVVGHELTHAFDDQGREYDKDGNLRPWWKNSSVEAFKQQTECMVEQYSNYSVNGEPVNGRHTLGENIADNGGLKAAYRAYQNWVKKNGAEETLPTLGLTNNQLFFLGFAQVWCSVRTPESSHEGLITDPHSPSRFRVIGSLSNSKEFSEHFQCPPGSPMNPRHKCEVW</sequence>